<comment type="function">
    <text evidence="1">Catalyzes the reversible transfer of the terminal phosphate group between ATP and AMP. Plays an important role in cellular energy homeostasis and in adenine nucleotide metabolism.</text>
</comment>
<comment type="catalytic activity">
    <reaction evidence="1">
        <text>AMP + ATP = 2 ADP</text>
        <dbReference type="Rhea" id="RHEA:12973"/>
        <dbReference type="ChEBI" id="CHEBI:30616"/>
        <dbReference type="ChEBI" id="CHEBI:456215"/>
        <dbReference type="ChEBI" id="CHEBI:456216"/>
        <dbReference type="EC" id="2.7.4.3"/>
    </reaction>
</comment>
<comment type="pathway">
    <text evidence="1">Purine metabolism; AMP biosynthesis via salvage pathway; AMP from ADP: step 1/1.</text>
</comment>
<comment type="subunit">
    <text evidence="1">Monomer.</text>
</comment>
<comment type="subcellular location">
    <subcellularLocation>
        <location evidence="1">Cytoplasm</location>
    </subcellularLocation>
</comment>
<comment type="domain">
    <text evidence="1">Consists of three domains, a large central CORE domain and two small peripheral domains, NMPbind and LID, which undergo movements during catalysis. The LID domain closes over the site of phosphoryl transfer upon ATP binding. Assembling and dissambling the active center during each catalytic cycle provides an effective means to prevent ATP hydrolysis.</text>
</comment>
<comment type="similarity">
    <text evidence="1">Belongs to the adenylate kinase family.</text>
</comment>
<accession>Q5H4A4</accession>
<sequence>MRLVLLGPPGSGKGTQATRLKDTFEIPHISTGDLLRAEVAAGSPLGLKAKEVMARGDLVSDDILLGMLEARLGQADVAKGFILDGYPRNVAQANALCALLSKIGQPLDAVVQLDVASELLVERIAGRAKAEGREDDNPESVRKRLQVYTDSTAPVIGFYEQRGKLTRVDGVGSLDEVLERIRKALGR</sequence>
<evidence type="ECO:0000255" key="1">
    <source>
        <dbReference type="HAMAP-Rule" id="MF_00235"/>
    </source>
</evidence>
<protein>
    <recommendedName>
        <fullName evidence="1">Adenylate kinase</fullName>
        <shortName evidence="1">AK</shortName>
        <ecNumber evidence="1">2.7.4.3</ecNumber>
    </recommendedName>
    <alternativeName>
        <fullName evidence="1">ATP-AMP transphosphorylase</fullName>
    </alternativeName>
    <alternativeName>
        <fullName evidence="1">ATP:AMP phosphotransferase</fullName>
    </alternativeName>
    <alternativeName>
        <fullName evidence="1">Adenylate monophosphate kinase</fullName>
    </alternativeName>
</protein>
<organism>
    <name type="scientific">Xanthomonas oryzae pv. oryzae (strain KACC10331 / KXO85)</name>
    <dbReference type="NCBI Taxonomy" id="291331"/>
    <lineage>
        <taxon>Bacteria</taxon>
        <taxon>Pseudomonadati</taxon>
        <taxon>Pseudomonadota</taxon>
        <taxon>Gammaproteobacteria</taxon>
        <taxon>Lysobacterales</taxon>
        <taxon>Lysobacteraceae</taxon>
        <taxon>Xanthomonas</taxon>
    </lineage>
</organism>
<name>KAD_XANOR</name>
<keyword id="KW-0067">ATP-binding</keyword>
<keyword id="KW-0963">Cytoplasm</keyword>
<keyword id="KW-0418">Kinase</keyword>
<keyword id="KW-0545">Nucleotide biosynthesis</keyword>
<keyword id="KW-0547">Nucleotide-binding</keyword>
<keyword id="KW-1185">Reference proteome</keyword>
<keyword id="KW-0808">Transferase</keyword>
<reference key="1">
    <citation type="journal article" date="2005" name="Nucleic Acids Res.">
        <title>The genome sequence of Xanthomonas oryzae pathovar oryzae KACC10331, the bacterial blight pathogen of rice.</title>
        <authorList>
            <person name="Lee B.-M."/>
            <person name="Park Y.-J."/>
            <person name="Park D.-S."/>
            <person name="Kang H.-W."/>
            <person name="Kim J.-G."/>
            <person name="Song E.-S."/>
            <person name="Park I.-C."/>
            <person name="Yoon U.-H."/>
            <person name="Hahn J.-H."/>
            <person name="Koo B.-S."/>
            <person name="Lee G.-B."/>
            <person name="Kim H."/>
            <person name="Park H.-S."/>
            <person name="Yoon K.-O."/>
            <person name="Kim J.-H."/>
            <person name="Jung C.-H."/>
            <person name="Koh N.-H."/>
            <person name="Seo J.-S."/>
            <person name="Go S.-J."/>
        </authorList>
    </citation>
    <scope>NUCLEOTIDE SEQUENCE [LARGE SCALE GENOMIC DNA]</scope>
    <source>
        <strain>KACC10331 / KXO85</strain>
    </source>
</reference>
<feature type="chain" id="PRO_1000058939" description="Adenylate kinase">
    <location>
        <begin position="1"/>
        <end position="187"/>
    </location>
</feature>
<feature type="region of interest" description="NMP" evidence="1">
    <location>
        <begin position="30"/>
        <end position="59"/>
    </location>
</feature>
<feature type="region of interest" description="LID" evidence="1">
    <location>
        <begin position="126"/>
        <end position="136"/>
    </location>
</feature>
<feature type="binding site" evidence="1">
    <location>
        <begin position="10"/>
        <end position="15"/>
    </location>
    <ligand>
        <name>ATP</name>
        <dbReference type="ChEBI" id="CHEBI:30616"/>
    </ligand>
</feature>
<feature type="binding site" evidence="1">
    <location>
        <position position="31"/>
    </location>
    <ligand>
        <name>AMP</name>
        <dbReference type="ChEBI" id="CHEBI:456215"/>
    </ligand>
</feature>
<feature type="binding site" evidence="1">
    <location>
        <position position="36"/>
    </location>
    <ligand>
        <name>AMP</name>
        <dbReference type="ChEBI" id="CHEBI:456215"/>
    </ligand>
</feature>
<feature type="binding site" evidence="1">
    <location>
        <begin position="57"/>
        <end position="59"/>
    </location>
    <ligand>
        <name>AMP</name>
        <dbReference type="ChEBI" id="CHEBI:456215"/>
    </ligand>
</feature>
<feature type="binding site" evidence="1">
    <location>
        <begin position="85"/>
        <end position="88"/>
    </location>
    <ligand>
        <name>AMP</name>
        <dbReference type="ChEBI" id="CHEBI:456215"/>
    </ligand>
</feature>
<feature type="binding site" evidence="1">
    <location>
        <position position="92"/>
    </location>
    <ligand>
        <name>AMP</name>
        <dbReference type="ChEBI" id="CHEBI:456215"/>
    </ligand>
</feature>
<feature type="binding site" evidence="1">
    <location>
        <position position="127"/>
    </location>
    <ligand>
        <name>ATP</name>
        <dbReference type="ChEBI" id="CHEBI:30616"/>
    </ligand>
</feature>
<feature type="binding site" evidence="1">
    <location>
        <position position="133"/>
    </location>
    <ligand>
        <name>AMP</name>
        <dbReference type="ChEBI" id="CHEBI:456215"/>
    </ligand>
</feature>
<feature type="binding site" evidence="1">
    <location>
        <position position="144"/>
    </location>
    <ligand>
        <name>AMP</name>
        <dbReference type="ChEBI" id="CHEBI:456215"/>
    </ligand>
</feature>
<feature type="binding site" evidence="1">
    <location>
        <position position="172"/>
    </location>
    <ligand>
        <name>ATP</name>
        <dbReference type="ChEBI" id="CHEBI:30616"/>
    </ligand>
</feature>
<proteinExistence type="inferred from homology"/>
<dbReference type="EC" id="2.7.4.3" evidence="1"/>
<dbReference type="EMBL" id="AE013598">
    <property type="protein sequence ID" value="AAW74217.1"/>
    <property type="molecule type" value="Genomic_DNA"/>
</dbReference>
<dbReference type="SMR" id="Q5H4A4"/>
<dbReference type="STRING" id="291331.XOO0963"/>
<dbReference type="KEGG" id="xoo:XOO0963"/>
<dbReference type="HOGENOM" id="CLU_032354_4_1_6"/>
<dbReference type="UniPathway" id="UPA00588">
    <property type="reaction ID" value="UER00649"/>
</dbReference>
<dbReference type="Proteomes" id="UP000006735">
    <property type="component" value="Chromosome"/>
</dbReference>
<dbReference type="GO" id="GO:0005737">
    <property type="term" value="C:cytoplasm"/>
    <property type="evidence" value="ECO:0007669"/>
    <property type="project" value="UniProtKB-SubCell"/>
</dbReference>
<dbReference type="GO" id="GO:0004017">
    <property type="term" value="F:adenylate kinase activity"/>
    <property type="evidence" value="ECO:0007669"/>
    <property type="project" value="UniProtKB-UniRule"/>
</dbReference>
<dbReference type="GO" id="GO:0005524">
    <property type="term" value="F:ATP binding"/>
    <property type="evidence" value="ECO:0007669"/>
    <property type="project" value="UniProtKB-UniRule"/>
</dbReference>
<dbReference type="GO" id="GO:0044209">
    <property type="term" value="P:AMP salvage"/>
    <property type="evidence" value="ECO:0007669"/>
    <property type="project" value="UniProtKB-UniRule"/>
</dbReference>
<dbReference type="CDD" id="cd01428">
    <property type="entry name" value="ADK"/>
    <property type="match status" value="1"/>
</dbReference>
<dbReference type="Gene3D" id="3.40.50.300">
    <property type="entry name" value="P-loop containing nucleotide triphosphate hydrolases"/>
    <property type="match status" value="1"/>
</dbReference>
<dbReference type="HAMAP" id="MF_00235">
    <property type="entry name" value="Adenylate_kinase_Adk"/>
    <property type="match status" value="1"/>
</dbReference>
<dbReference type="InterPro" id="IPR000850">
    <property type="entry name" value="Adenylat/UMP-CMP_kin"/>
</dbReference>
<dbReference type="InterPro" id="IPR033690">
    <property type="entry name" value="Adenylat_kinase_CS"/>
</dbReference>
<dbReference type="InterPro" id="IPR027417">
    <property type="entry name" value="P-loop_NTPase"/>
</dbReference>
<dbReference type="NCBIfam" id="NF001381">
    <property type="entry name" value="PRK00279.1-3"/>
    <property type="match status" value="1"/>
</dbReference>
<dbReference type="NCBIfam" id="NF011100">
    <property type="entry name" value="PRK14527.1"/>
    <property type="match status" value="1"/>
</dbReference>
<dbReference type="NCBIfam" id="NF011101">
    <property type="entry name" value="PRK14528.1"/>
    <property type="match status" value="1"/>
</dbReference>
<dbReference type="NCBIfam" id="NF011104">
    <property type="entry name" value="PRK14531.1"/>
    <property type="match status" value="1"/>
</dbReference>
<dbReference type="NCBIfam" id="NF011105">
    <property type="entry name" value="PRK14532.1"/>
    <property type="match status" value="1"/>
</dbReference>
<dbReference type="PANTHER" id="PTHR23359">
    <property type="entry name" value="NUCLEOTIDE KINASE"/>
    <property type="match status" value="1"/>
</dbReference>
<dbReference type="Pfam" id="PF00406">
    <property type="entry name" value="ADK"/>
    <property type="match status" value="1"/>
</dbReference>
<dbReference type="PRINTS" id="PR00094">
    <property type="entry name" value="ADENYLTKNASE"/>
</dbReference>
<dbReference type="SUPFAM" id="SSF52540">
    <property type="entry name" value="P-loop containing nucleoside triphosphate hydrolases"/>
    <property type="match status" value="1"/>
</dbReference>
<dbReference type="PROSITE" id="PS00113">
    <property type="entry name" value="ADENYLATE_KINASE"/>
    <property type="match status" value="1"/>
</dbReference>
<gene>
    <name evidence="1" type="primary">adk</name>
    <name type="ordered locus">XOO0963</name>
</gene>